<name>CORZ_PERAM</name>
<proteinExistence type="evidence at protein level"/>
<organism>
    <name type="scientific">Periplaneta americana</name>
    <name type="common">American cockroach</name>
    <name type="synonym">Blatta americana</name>
    <dbReference type="NCBI Taxonomy" id="6978"/>
    <lineage>
        <taxon>Eukaryota</taxon>
        <taxon>Metazoa</taxon>
        <taxon>Ecdysozoa</taxon>
        <taxon>Arthropoda</taxon>
        <taxon>Hexapoda</taxon>
        <taxon>Insecta</taxon>
        <taxon>Pterygota</taxon>
        <taxon>Neoptera</taxon>
        <taxon>Polyneoptera</taxon>
        <taxon>Dictyoptera</taxon>
        <taxon>Blattodea</taxon>
        <taxon>Blattoidea</taxon>
        <taxon>Blattidae</taxon>
        <taxon>Blattinae</taxon>
        <taxon>Periplaneta</taxon>
    </lineage>
</organism>
<feature type="peptide" id="PRO_0000043455" description="Corazonin">
    <location>
        <begin position="1"/>
        <end position="11"/>
    </location>
</feature>
<feature type="modified residue" description="Pyrrolidone carboxylic acid" evidence="1">
    <location>
        <position position="1"/>
    </location>
</feature>
<feature type="modified residue" description="Asparagine amide" evidence="1">
    <location>
        <position position="11"/>
    </location>
</feature>
<dbReference type="PIR" id="S05002">
    <property type="entry name" value="S05002"/>
</dbReference>
<dbReference type="GO" id="GO:0005576">
    <property type="term" value="C:extracellular region"/>
    <property type="evidence" value="ECO:0000314"/>
    <property type="project" value="UniProtKB"/>
</dbReference>
<dbReference type="GO" id="GO:0005184">
    <property type="term" value="F:neuropeptide hormone activity"/>
    <property type="evidence" value="ECO:0000314"/>
    <property type="project" value="UniProtKB"/>
</dbReference>
<dbReference type="GO" id="GO:0007218">
    <property type="term" value="P:neuropeptide signaling pathway"/>
    <property type="evidence" value="ECO:0007669"/>
    <property type="project" value="UniProtKB-KW"/>
</dbReference>
<dbReference type="GO" id="GO:0045823">
    <property type="term" value="P:positive regulation of heart contraction"/>
    <property type="evidence" value="ECO:0000314"/>
    <property type="project" value="UniProtKB"/>
</dbReference>
<protein>
    <recommendedName>
        <fullName>Corazonin</fullName>
    </recommendedName>
</protein>
<comment type="function">
    <text>Cardioactive peptide. Corazonin is probably involved in the physiological regulation of the heart beat.</text>
</comment>
<comment type="subcellular location">
    <subcellularLocation>
        <location>Secreted</location>
    </subcellularLocation>
</comment>
<comment type="similarity">
    <text evidence="2">Belongs to the corazonin family.</text>
</comment>
<sequence length="11" mass="1387">QTFQYSRGWTN</sequence>
<keyword id="KW-0027">Amidation</keyword>
<keyword id="KW-0903">Direct protein sequencing</keyword>
<keyword id="KW-0527">Neuropeptide</keyword>
<keyword id="KW-0873">Pyrrolidone carboxylic acid</keyword>
<keyword id="KW-0964">Secreted</keyword>
<accession>P11496</accession>
<reference key="1">
    <citation type="journal article" date="1989" name="FEBS Lett.">
        <title>Isolation and structure of corazonin, a cardioactive peptide from the American cockroach.</title>
        <authorList>
            <person name="Veenstra J.A."/>
        </authorList>
    </citation>
    <scope>PROTEIN SEQUENCE</scope>
    <scope>PYROGLUTAMATE FORMATION AT GLN-1</scope>
    <scope>AMIDATION AT ASN-11</scope>
    <source>
        <tissue>Corpora cardiaca</tissue>
    </source>
</reference>
<evidence type="ECO:0000269" key="1">
    <source>
    </source>
</evidence>
<evidence type="ECO:0000305" key="2"/>